<proteinExistence type="evidence at transcript level"/>
<accession>Q8GUK4</accession>
<accession>Q56ZV1</accession>
<accession>Q93YP3</accession>
<accession>Q9SVT2</accession>
<feature type="signal peptide" evidence="3">
    <location>
        <begin position="1"/>
        <end position="21"/>
    </location>
</feature>
<feature type="propeptide" id="PRO_0000435210" description="Activation peptide" evidence="1">
    <location>
        <begin position="22"/>
        <end position="120"/>
    </location>
</feature>
<feature type="chain" id="PRO_5004306433" description="Subtilisin-like protease SBT3.13">
    <location>
        <begin position="121"/>
        <end status="unknown"/>
    </location>
</feature>
<feature type="propeptide" id="PRO_0000435211" evidence="1">
    <location>
        <begin status="unknown"/>
        <end position="766"/>
    </location>
</feature>
<feature type="domain" description="Inhibitor I9" evidence="3">
    <location>
        <begin position="41"/>
        <end position="119"/>
    </location>
</feature>
<feature type="domain" description="Peptidase S8" evidence="5">
    <location>
        <begin position="134"/>
        <end position="618"/>
    </location>
</feature>
<feature type="active site" description="Charge relay system" evidence="5">
    <location>
        <position position="162"/>
    </location>
</feature>
<feature type="active site" description="Charge relay system" evidence="5">
    <location>
        <position position="239"/>
    </location>
</feature>
<feature type="active site" description="Charge relay system" evidence="5">
    <location>
        <position position="549"/>
    </location>
</feature>
<feature type="glycosylation site" description="N-linked (GlcNAc...) asparagine" evidence="4">
    <location>
        <position position="195"/>
    </location>
</feature>
<feature type="glycosylation site" description="N-linked (GlcNAc...) asparagine" evidence="4">
    <location>
        <position position="223"/>
    </location>
</feature>
<feature type="glycosylation site" description="N-linked (GlcNAc...) asparagine" evidence="4">
    <location>
        <position position="254"/>
    </location>
</feature>
<feature type="glycosylation site" description="N-linked (GlcNAc...) asparagine" evidence="4">
    <location>
        <position position="389"/>
    </location>
</feature>
<feature type="glycosylation site" description="N-linked (GlcNAc...) asparagine" evidence="4">
    <location>
        <position position="641"/>
    </location>
</feature>
<dbReference type="EC" id="3.4.21.-" evidence="6"/>
<dbReference type="EMBL" id="AL035527">
    <property type="protein sequence ID" value="CAB36809.1"/>
    <property type="status" value="ALT_SEQ"/>
    <property type="molecule type" value="Genomic_DNA"/>
</dbReference>
<dbReference type="EMBL" id="AL161555">
    <property type="protein sequence ID" value="CAB81272.1"/>
    <property type="status" value="ALT_SEQ"/>
    <property type="molecule type" value="Genomic_DNA"/>
</dbReference>
<dbReference type="EMBL" id="CP002687">
    <property type="protein sequence ID" value="AEE84485.1"/>
    <property type="molecule type" value="Genomic_DNA"/>
</dbReference>
<dbReference type="EMBL" id="AY059884">
    <property type="protein sequence ID" value="AAL24366.1"/>
    <property type="status" value="ALT_INIT"/>
    <property type="molecule type" value="mRNA"/>
</dbReference>
<dbReference type="EMBL" id="AY128803">
    <property type="protein sequence ID" value="AAM91203.1"/>
    <property type="molecule type" value="mRNA"/>
</dbReference>
<dbReference type="EMBL" id="BT002437">
    <property type="protein sequence ID" value="AAO00797.1"/>
    <property type="molecule type" value="mRNA"/>
</dbReference>
<dbReference type="EMBL" id="AK220860">
    <property type="protein sequence ID" value="BAD94221.1"/>
    <property type="status" value="ALT_INIT"/>
    <property type="molecule type" value="mRNA"/>
</dbReference>
<dbReference type="PIR" id="T05840">
    <property type="entry name" value="T05840"/>
</dbReference>
<dbReference type="RefSeq" id="NP_567633.2">
    <property type="nucleotide sequence ID" value="NM_118285.3"/>
</dbReference>
<dbReference type="SMR" id="Q8GUK4"/>
<dbReference type="FunCoup" id="Q8GUK4">
    <property type="interactions" value="4"/>
</dbReference>
<dbReference type="IntAct" id="Q8GUK4">
    <property type="interactions" value="1"/>
</dbReference>
<dbReference type="STRING" id="3702.Q8GUK4"/>
<dbReference type="MEROPS" id="S08.A48"/>
<dbReference type="GlyCosmos" id="Q8GUK4">
    <property type="glycosylation" value="5 sites, No reported glycans"/>
</dbReference>
<dbReference type="GlyGen" id="Q8GUK4">
    <property type="glycosylation" value="5 sites"/>
</dbReference>
<dbReference type="PaxDb" id="3702-AT4G21650.1"/>
<dbReference type="ProteomicsDB" id="232905"/>
<dbReference type="EnsemblPlants" id="AT4G21650.1">
    <property type="protein sequence ID" value="AT4G21650.1"/>
    <property type="gene ID" value="AT4G21650"/>
</dbReference>
<dbReference type="GeneID" id="828252"/>
<dbReference type="Gramene" id="AT4G21650.1">
    <property type="protein sequence ID" value="AT4G21650.1"/>
    <property type="gene ID" value="AT4G21650"/>
</dbReference>
<dbReference type="KEGG" id="ath:AT4G21650"/>
<dbReference type="Araport" id="AT4G21650"/>
<dbReference type="TAIR" id="AT4G21650">
    <property type="gene designation" value="SBT3.13"/>
</dbReference>
<dbReference type="eggNOG" id="ENOG502QSF0">
    <property type="taxonomic scope" value="Eukaryota"/>
</dbReference>
<dbReference type="HOGENOM" id="CLU_000625_4_2_1"/>
<dbReference type="InParanoid" id="Q8GUK4"/>
<dbReference type="OMA" id="VEHAGGC"/>
<dbReference type="PhylomeDB" id="Q8GUK4"/>
<dbReference type="PRO" id="PR:Q8GUK4"/>
<dbReference type="Proteomes" id="UP000006548">
    <property type="component" value="Chromosome 4"/>
</dbReference>
<dbReference type="ExpressionAtlas" id="Q8GUK4">
    <property type="expression patterns" value="baseline and differential"/>
</dbReference>
<dbReference type="GO" id="GO:0005829">
    <property type="term" value="C:cytosol"/>
    <property type="evidence" value="ECO:0007005"/>
    <property type="project" value="TAIR"/>
</dbReference>
<dbReference type="GO" id="GO:0005576">
    <property type="term" value="C:extracellular region"/>
    <property type="evidence" value="ECO:0007669"/>
    <property type="project" value="UniProtKB-SubCell"/>
</dbReference>
<dbReference type="GO" id="GO:0004252">
    <property type="term" value="F:serine-type endopeptidase activity"/>
    <property type="evidence" value="ECO:0007669"/>
    <property type="project" value="InterPro"/>
</dbReference>
<dbReference type="GO" id="GO:0006508">
    <property type="term" value="P:proteolysis"/>
    <property type="evidence" value="ECO:0007669"/>
    <property type="project" value="UniProtKB-KW"/>
</dbReference>
<dbReference type="CDD" id="cd02120">
    <property type="entry name" value="PA_subtilisin_like"/>
    <property type="match status" value="1"/>
</dbReference>
<dbReference type="CDD" id="cd04852">
    <property type="entry name" value="Peptidases_S8_3"/>
    <property type="match status" value="1"/>
</dbReference>
<dbReference type="FunFam" id="2.60.40.2310:FF:000001">
    <property type="entry name" value="Subtilisin-like protease SBT1.5"/>
    <property type="match status" value="1"/>
</dbReference>
<dbReference type="FunFam" id="3.40.50.200:FF:000006">
    <property type="entry name" value="Subtilisin-like protease SBT1.5"/>
    <property type="match status" value="1"/>
</dbReference>
<dbReference type="FunFam" id="3.50.30.30:FF:000061">
    <property type="entry name" value="Subtilisin-like protease SBT3.13"/>
    <property type="match status" value="1"/>
</dbReference>
<dbReference type="FunFam" id="3.30.70.80:FF:000002">
    <property type="entry name" value="Subtilisin-like protease SBT5.3"/>
    <property type="match status" value="1"/>
</dbReference>
<dbReference type="Gene3D" id="2.60.40.2310">
    <property type="match status" value="1"/>
</dbReference>
<dbReference type="Gene3D" id="3.50.30.30">
    <property type="match status" value="1"/>
</dbReference>
<dbReference type="Gene3D" id="3.30.70.80">
    <property type="entry name" value="Peptidase S8 propeptide/proteinase inhibitor I9"/>
    <property type="match status" value="1"/>
</dbReference>
<dbReference type="Gene3D" id="3.40.50.200">
    <property type="entry name" value="Peptidase S8/S53 domain"/>
    <property type="match status" value="1"/>
</dbReference>
<dbReference type="InterPro" id="IPR000209">
    <property type="entry name" value="Peptidase_S8/S53_dom"/>
</dbReference>
<dbReference type="InterPro" id="IPR036852">
    <property type="entry name" value="Peptidase_S8/S53_dom_sf"/>
</dbReference>
<dbReference type="InterPro" id="IPR023828">
    <property type="entry name" value="Peptidase_S8_Ser-AS"/>
</dbReference>
<dbReference type="InterPro" id="IPR015500">
    <property type="entry name" value="Peptidase_S8_subtilisin-rel"/>
</dbReference>
<dbReference type="InterPro" id="IPR034197">
    <property type="entry name" value="Peptidases_S8_3"/>
</dbReference>
<dbReference type="InterPro" id="IPR010259">
    <property type="entry name" value="S8pro/Inhibitor_I9"/>
</dbReference>
<dbReference type="InterPro" id="IPR037045">
    <property type="entry name" value="S8pro/Inhibitor_I9_sf"/>
</dbReference>
<dbReference type="InterPro" id="IPR045051">
    <property type="entry name" value="SBT"/>
</dbReference>
<dbReference type="InterPro" id="IPR041469">
    <property type="entry name" value="Subtilisin-like_FN3"/>
</dbReference>
<dbReference type="PANTHER" id="PTHR10795">
    <property type="entry name" value="PROPROTEIN CONVERTASE SUBTILISIN/KEXIN"/>
    <property type="match status" value="1"/>
</dbReference>
<dbReference type="Pfam" id="PF17766">
    <property type="entry name" value="fn3_6"/>
    <property type="match status" value="1"/>
</dbReference>
<dbReference type="Pfam" id="PF05922">
    <property type="entry name" value="Inhibitor_I9"/>
    <property type="match status" value="1"/>
</dbReference>
<dbReference type="Pfam" id="PF00082">
    <property type="entry name" value="Peptidase_S8"/>
    <property type="match status" value="1"/>
</dbReference>
<dbReference type="PRINTS" id="PR00723">
    <property type="entry name" value="SUBTILISIN"/>
</dbReference>
<dbReference type="SUPFAM" id="SSF52743">
    <property type="entry name" value="Subtilisin-like"/>
    <property type="match status" value="1"/>
</dbReference>
<dbReference type="PROSITE" id="PS51892">
    <property type="entry name" value="SUBTILASE"/>
    <property type="match status" value="1"/>
</dbReference>
<dbReference type="PROSITE" id="PS00138">
    <property type="entry name" value="SUBTILASE_SER"/>
    <property type="match status" value="1"/>
</dbReference>
<sequence>MNNSLQSSKLVLLLAIALVLFLNTELDFLTAAGALDSDSKVYIVYLGEREHDDPELVTASHHQMLESLLQSKEDAQNSLIYSYQHGFSGFAALLTSSQAKKISEHPEVIHVIPNRIRKLKTTRAWDHLGLSPIPTSFSSLSSVKGLLHDTNLGSEAIIGVIDSGIWPESKAVNDQGLGPIPKRWRGKCEPGEQFNATIHCNNKLIGARYYLNGVVAAIGGKFNRTIIQDFQSTRDANGHGTHTATIAGGSFVPNVSYFGLAQGLVRGGAPRARIASYKACWNVMRDEGGGTDGRCTSADMWKAFDDAIHDGVDVLSVSIGGGIPEDSEVDKLDYIAAFHAVAKGITVVAAAGNEGPGAHTVDNVAPWLLTVAATTLDRSFPTKITLGNNQTLFAESLFTGPEISTGLAFLDSDSDDTVDVKGKTVLVFDSATPIAGKGVAAVILAQKPDDLLSRCNGVPCIFPDYEFGTEILKYIRTTRSPTVRITAATTLTGQPATTKVAAFSCRGPNSVSPAILKPDIAAPGVSILAAISPLNPEEQNGFGLLSGTSMSTPVVSGIIALLKSLHPKWSPAAVRSALVTTAWRTSPSGEPIFAEGSNKKLADPFDYGGGLVNPEKAAKPGLVYDMGIVDYIKYMCSAGYNDSSISRVLGKKTNCPIPKPSMLDINLPSITIPNLEKEVTLTRTVTNVGPIKSVYRAVIESPLGITLTVNPTTLVFKSAAKRVLTFSVKAKTSHKVNTGYFFGSLTWSDGVHDVIIPVSVKTTISM</sequence>
<gene>
    <name evidence="7" type="primary">SBT3.13</name>
    <name evidence="9" type="ordered locus">At4g21650</name>
    <name evidence="11" type="ORF">F17L22.110</name>
</gene>
<evidence type="ECO:0000250" key="1">
    <source>
        <dbReference type="UniProtKB" id="Q39547"/>
    </source>
</evidence>
<evidence type="ECO:0000250" key="2">
    <source>
        <dbReference type="UniProtKB" id="Q84WS0"/>
    </source>
</evidence>
<evidence type="ECO:0000255" key="3"/>
<evidence type="ECO:0000255" key="4">
    <source>
        <dbReference type="PROSITE-ProRule" id="PRU00498"/>
    </source>
</evidence>
<evidence type="ECO:0000255" key="5">
    <source>
        <dbReference type="PROSITE-ProRule" id="PRU01240"/>
    </source>
</evidence>
<evidence type="ECO:0000255" key="6">
    <source>
        <dbReference type="PROSITE-ProRule" id="PRU10082"/>
    </source>
</evidence>
<evidence type="ECO:0000303" key="7">
    <source>
    </source>
</evidence>
<evidence type="ECO:0000305" key="8"/>
<evidence type="ECO:0000312" key="9">
    <source>
        <dbReference type="Araport" id="AT4G21650"/>
    </source>
</evidence>
<evidence type="ECO:0000312" key="10">
    <source>
        <dbReference type="EMBL" id="AAO00797.1"/>
    </source>
</evidence>
<evidence type="ECO:0000312" key="11">
    <source>
        <dbReference type="EMBL" id="CAB36809.1"/>
    </source>
</evidence>
<keyword id="KW-0068">Autocatalytic cleavage</keyword>
<keyword id="KW-0325">Glycoprotein</keyword>
<keyword id="KW-0378">Hydrolase</keyword>
<keyword id="KW-0645">Protease</keyword>
<keyword id="KW-1185">Reference proteome</keyword>
<keyword id="KW-0964">Secreted</keyword>
<keyword id="KW-0720">Serine protease</keyword>
<keyword id="KW-0732">Signal</keyword>
<keyword id="KW-0865">Zymogen</keyword>
<protein>
    <recommendedName>
        <fullName evidence="7">Subtilisin-like protease SBT3.13</fullName>
        <ecNumber evidence="6">3.4.21.-</ecNumber>
    </recommendedName>
    <alternativeName>
        <fullName evidence="7">Subtilase subfamily 3 member 13</fullName>
        <shortName evidence="7">AtSBT3.13</shortName>
    </alternativeName>
</protein>
<comment type="subcellular location">
    <subcellularLocation>
        <location evidence="2">Secreted</location>
    </subcellularLocation>
</comment>
<comment type="similarity">
    <text evidence="8">Belongs to the peptidase S8 family.</text>
</comment>
<comment type="sequence caution" evidence="8">
    <conflict type="erroneous initiation">
        <sequence resource="EMBL-CDS" id="AAL24366"/>
    </conflict>
    <text>Truncated N-terminus.</text>
</comment>
<comment type="sequence caution" evidence="8">
    <conflict type="erroneous initiation">
        <sequence resource="EMBL-CDS" id="BAD94221"/>
    </conflict>
    <text>Truncated N-terminus.</text>
</comment>
<comment type="sequence caution" evidence="8">
    <conflict type="erroneous gene model prediction">
        <sequence resource="EMBL-CDS" id="CAB36809"/>
    </conflict>
</comment>
<comment type="sequence caution" evidence="8">
    <conflict type="erroneous gene model prediction">
        <sequence resource="EMBL-CDS" id="CAB81272"/>
    </conflict>
</comment>
<organism evidence="10">
    <name type="scientific">Arabidopsis thaliana</name>
    <name type="common">Mouse-ear cress</name>
    <dbReference type="NCBI Taxonomy" id="3702"/>
    <lineage>
        <taxon>Eukaryota</taxon>
        <taxon>Viridiplantae</taxon>
        <taxon>Streptophyta</taxon>
        <taxon>Embryophyta</taxon>
        <taxon>Tracheophyta</taxon>
        <taxon>Spermatophyta</taxon>
        <taxon>Magnoliopsida</taxon>
        <taxon>eudicotyledons</taxon>
        <taxon>Gunneridae</taxon>
        <taxon>Pentapetalae</taxon>
        <taxon>rosids</taxon>
        <taxon>malvids</taxon>
        <taxon>Brassicales</taxon>
        <taxon>Brassicaceae</taxon>
        <taxon>Camelineae</taxon>
        <taxon>Arabidopsis</taxon>
    </lineage>
</organism>
<reference key="1">
    <citation type="journal article" date="1999" name="Nature">
        <title>Sequence and analysis of chromosome 4 of the plant Arabidopsis thaliana.</title>
        <authorList>
            <person name="Mayer K.F.X."/>
            <person name="Schueller C."/>
            <person name="Wambutt R."/>
            <person name="Murphy G."/>
            <person name="Volckaert G."/>
            <person name="Pohl T."/>
            <person name="Duesterhoeft A."/>
            <person name="Stiekema W."/>
            <person name="Entian K.-D."/>
            <person name="Terryn N."/>
            <person name="Harris B."/>
            <person name="Ansorge W."/>
            <person name="Brandt P."/>
            <person name="Grivell L.A."/>
            <person name="Rieger M."/>
            <person name="Weichselgartner M."/>
            <person name="de Simone V."/>
            <person name="Obermaier B."/>
            <person name="Mache R."/>
            <person name="Mueller M."/>
            <person name="Kreis M."/>
            <person name="Delseny M."/>
            <person name="Puigdomenech P."/>
            <person name="Watson M."/>
            <person name="Schmidtheini T."/>
            <person name="Reichert B."/>
            <person name="Portetelle D."/>
            <person name="Perez-Alonso M."/>
            <person name="Boutry M."/>
            <person name="Bancroft I."/>
            <person name="Vos P."/>
            <person name="Hoheisel J."/>
            <person name="Zimmermann W."/>
            <person name="Wedler H."/>
            <person name="Ridley P."/>
            <person name="Langham S.-A."/>
            <person name="McCullagh B."/>
            <person name="Bilham L."/>
            <person name="Robben J."/>
            <person name="van der Schueren J."/>
            <person name="Grymonprez B."/>
            <person name="Chuang Y.-J."/>
            <person name="Vandenbussche F."/>
            <person name="Braeken M."/>
            <person name="Weltjens I."/>
            <person name="Voet M."/>
            <person name="Bastiaens I."/>
            <person name="Aert R."/>
            <person name="Defoor E."/>
            <person name="Weitzenegger T."/>
            <person name="Bothe G."/>
            <person name="Ramsperger U."/>
            <person name="Hilbert H."/>
            <person name="Braun M."/>
            <person name="Holzer E."/>
            <person name="Brandt A."/>
            <person name="Peters S."/>
            <person name="van Staveren M."/>
            <person name="Dirkse W."/>
            <person name="Mooijman P."/>
            <person name="Klein Lankhorst R."/>
            <person name="Rose M."/>
            <person name="Hauf J."/>
            <person name="Koetter P."/>
            <person name="Berneiser S."/>
            <person name="Hempel S."/>
            <person name="Feldpausch M."/>
            <person name="Lamberth S."/>
            <person name="Van den Daele H."/>
            <person name="De Keyser A."/>
            <person name="Buysshaert C."/>
            <person name="Gielen J."/>
            <person name="Villarroel R."/>
            <person name="De Clercq R."/>
            <person name="van Montagu M."/>
            <person name="Rogers J."/>
            <person name="Cronin A."/>
            <person name="Quail M.A."/>
            <person name="Bray-Allen S."/>
            <person name="Clark L."/>
            <person name="Doggett J."/>
            <person name="Hall S."/>
            <person name="Kay M."/>
            <person name="Lennard N."/>
            <person name="McLay K."/>
            <person name="Mayes R."/>
            <person name="Pettett A."/>
            <person name="Rajandream M.A."/>
            <person name="Lyne M."/>
            <person name="Benes V."/>
            <person name="Rechmann S."/>
            <person name="Borkova D."/>
            <person name="Bloecker H."/>
            <person name="Scharfe M."/>
            <person name="Grimm M."/>
            <person name="Loehnert T.-H."/>
            <person name="Dose S."/>
            <person name="de Haan M."/>
            <person name="Maarse A.C."/>
            <person name="Schaefer M."/>
            <person name="Mueller-Auer S."/>
            <person name="Gabel C."/>
            <person name="Fuchs M."/>
            <person name="Fartmann B."/>
            <person name="Granderath K."/>
            <person name="Dauner D."/>
            <person name="Herzl A."/>
            <person name="Neumann S."/>
            <person name="Argiriou A."/>
            <person name="Vitale D."/>
            <person name="Liguori R."/>
            <person name="Piravandi E."/>
            <person name="Massenet O."/>
            <person name="Quigley F."/>
            <person name="Clabauld G."/>
            <person name="Muendlein A."/>
            <person name="Felber R."/>
            <person name="Schnabl S."/>
            <person name="Hiller R."/>
            <person name="Schmidt W."/>
            <person name="Lecharny A."/>
            <person name="Aubourg S."/>
            <person name="Chefdor F."/>
            <person name="Cooke R."/>
            <person name="Berger C."/>
            <person name="Monfort A."/>
            <person name="Casacuberta E."/>
            <person name="Gibbons T."/>
            <person name="Weber N."/>
            <person name="Vandenbol M."/>
            <person name="Bargues M."/>
            <person name="Terol J."/>
            <person name="Torres A."/>
            <person name="Perez-Perez A."/>
            <person name="Purnelle B."/>
            <person name="Bent E."/>
            <person name="Johnson S."/>
            <person name="Tacon D."/>
            <person name="Jesse T."/>
            <person name="Heijnen L."/>
            <person name="Schwarz S."/>
            <person name="Scholler P."/>
            <person name="Heber S."/>
            <person name="Francs P."/>
            <person name="Bielke C."/>
            <person name="Frishman D."/>
            <person name="Haase D."/>
            <person name="Lemcke K."/>
            <person name="Mewes H.-W."/>
            <person name="Stocker S."/>
            <person name="Zaccaria P."/>
            <person name="Bevan M."/>
            <person name="Wilson R.K."/>
            <person name="de la Bastide M."/>
            <person name="Habermann K."/>
            <person name="Parnell L."/>
            <person name="Dedhia N."/>
            <person name="Gnoj L."/>
            <person name="Schutz K."/>
            <person name="Huang E."/>
            <person name="Spiegel L."/>
            <person name="Sekhon M."/>
            <person name="Murray J."/>
            <person name="Sheet P."/>
            <person name="Cordes M."/>
            <person name="Abu-Threideh J."/>
            <person name="Stoneking T."/>
            <person name="Kalicki J."/>
            <person name="Graves T."/>
            <person name="Harmon G."/>
            <person name="Edwards J."/>
            <person name="Latreille P."/>
            <person name="Courtney L."/>
            <person name="Cloud J."/>
            <person name="Abbott A."/>
            <person name="Scott K."/>
            <person name="Johnson D."/>
            <person name="Minx P."/>
            <person name="Bentley D."/>
            <person name="Fulton B."/>
            <person name="Miller N."/>
            <person name="Greco T."/>
            <person name="Kemp K."/>
            <person name="Kramer J."/>
            <person name="Fulton L."/>
            <person name="Mardis E."/>
            <person name="Dante M."/>
            <person name="Pepin K."/>
            <person name="Hillier L.W."/>
            <person name="Nelson J."/>
            <person name="Spieth J."/>
            <person name="Ryan E."/>
            <person name="Andrews S."/>
            <person name="Geisel C."/>
            <person name="Layman D."/>
            <person name="Du H."/>
            <person name="Ali J."/>
            <person name="Berghoff A."/>
            <person name="Jones K."/>
            <person name="Drone K."/>
            <person name="Cotton M."/>
            <person name="Joshu C."/>
            <person name="Antonoiu B."/>
            <person name="Zidanic M."/>
            <person name="Strong C."/>
            <person name="Sun H."/>
            <person name="Lamar B."/>
            <person name="Yordan C."/>
            <person name="Ma P."/>
            <person name="Zhong J."/>
            <person name="Preston R."/>
            <person name="Vil D."/>
            <person name="Shekher M."/>
            <person name="Matero A."/>
            <person name="Shah R."/>
            <person name="Swaby I.K."/>
            <person name="O'Shaughnessy A."/>
            <person name="Rodriguez M."/>
            <person name="Hoffman J."/>
            <person name="Till S."/>
            <person name="Granat S."/>
            <person name="Shohdy N."/>
            <person name="Hasegawa A."/>
            <person name="Hameed A."/>
            <person name="Lodhi M."/>
            <person name="Johnson A."/>
            <person name="Chen E."/>
            <person name="Marra M.A."/>
            <person name="Martienssen R."/>
            <person name="McCombie W.R."/>
        </authorList>
    </citation>
    <scope>NUCLEOTIDE SEQUENCE [LARGE SCALE GENOMIC DNA]</scope>
    <source>
        <strain>cv. Columbia</strain>
    </source>
</reference>
<reference key="2">
    <citation type="journal article" date="2017" name="Plant J.">
        <title>Araport11: a complete reannotation of the Arabidopsis thaliana reference genome.</title>
        <authorList>
            <person name="Cheng C.Y."/>
            <person name="Krishnakumar V."/>
            <person name="Chan A.P."/>
            <person name="Thibaud-Nissen F."/>
            <person name="Schobel S."/>
            <person name="Town C.D."/>
        </authorList>
    </citation>
    <scope>GENOME REANNOTATION</scope>
    <source>
        <strain>cv. Columbia</strain>
    </source>
</reference>
<reference key="3">
    <citation type="journal article" date="2003" name="Science">
        <title>Empirical analysis of transcriptional activity in the Arabidopsis genome.</title>
        <authorList>
            <person name="Yamada K."/>
            <person name="Lim J."/>
            <person name="Dale J.M."/>
            <person name="Chen H."/>
            <person name="Shinn P."/>
            <person name="Palm C.J."/>
            <person name="Southwick A.M."/>
            <person name="Wu H.C."/>
            <person name="Kim C.J."/>
            <person name="Nguyen M."/>
            <person name="Pham P.K."/>
            <person name="Cheuk R.F."/>
            <person name="Karlin-Newmann G."/>
            <person name="Liu S.X."/>
            <person name="Lam B."/>
            <person name="Sakano H."/>
            <person name="Wu T."/>
            <person name="Yu G."/>
            <person name="Miranda M."/>
            <person name="Quach H.L."/>
            <person name="Tripp M."/>
            <person name="Chang C.H."/>
            <person name="Lee J.M."/>
            <person name="Toriumi M.J."/>
            <person name="Chan M.M."/>
            <person name="Tang C.C."/>
            <person name="Onodera C.S."/>
            <person name="Deng J.M."/>
            <person name="Akiyama K."/>
            <person name="Ansari Y."/>
            <person name="Arakawa T."/>
            <person name="Banh J."/>
            <person name="Banno F."/>
            <person name="Bowser L."/>
            <person name="Brooks S.Y."/>
            <person name="Carninci P."/>
            <person name="Chao Q."/>
            <person name="Choy N."/>
            <person name="Enju A."/>
            <person name="Goldsmith A.D."/>
            <person name="Gurjal M."/>
            <person name="Hansen N.F."/>
            <person name="Hayashizaki Y."/>
            <person name="Johnson-Hopson C."/>
            <person name="Hsuan V.W."/>
            <person name="Iida K."/>
            <person name="Karnes M."/>
            <person name="Khan S."/>
            <person name="Koesema E."/>
            <person name="Ishida J."/>
            <person name="Jiang P.X."/>
            <person name="Jones T."/>
            <person name="Kawai J."/>
            <person name="Kamiya A."/>
            <person name="Meyers C."/>
            <person name="Nakajima M."/>
            <person name="Narusaka M."/>
            <person name="Seki M."/>
            <person name="Sakurai T."/>
            <person name="Satou M."/>
            <person name="Tamse R."/>
            <person name="Vaysberg M."/>
            <person name="Wallender E.K."/>
            <person name="Wong C."/>
            <person name="Yamamura Y."/>
            <person name="Yuan S."/>
            <person name="Shinozaki K."/>
            <person name="Davis R.W."/>
            <person name="Theologis A."/>
            <person name="Ecker J.R."/>
        </authorList>
    </citation>
    <scope>NUCLEOTIDE SEQUENCE [LARGE SCALE MRNA]</scope>
    <source>
        <strain>cv. Columbia</strain>
    </source>
</reference>
<reference key="4">
    <citation type="submission" date="2005-03" db="EMBL/GenBank/DDBJ databases">
        <title>Large-scale analysis of RIKEN Arabidopsis full-length (RAFL) cDNAs.</title>
        <authorList>
            <person name="Totoki Y."/>
            <person name="Seki M."/>
            <person name="Ishida J."/>
            <person name="Nakajima M."/>
            <person name="Enju A."/>
            <person name="Kamiya A."/>
            <person name="Narusaka M."/>
            <person name="Shin-i T."/>
            <person name="Nakagawa M."/>
            <person name="Sakamoto N."/>
            <person name="Oishi K."/>
            <person name="Kohara Y."/>
            <person name="Kobayashi M."/>
            <person name="Toyoda A."/>
            <person name="Sakaki Y."/>
            <person name="Sakurai T."/>
            <person name="Iida K."/>
            <person name="Akiyama K."/>
            <person name="Satou M."/>
            <person name="Toyoda T."/>
            <person name="Konagaya A."/>
            <person name="Carninci P."/>
            <person name="Kawai J."/>
            <person name="Hayashizaki Y."/>
            <person name="Shinozaki K."/>
        </authorList>
    </citation>
    <scope>NUCLEOTIDE SEQUENCE [LARGE SCALE MRNA] OF 616-766</scope>
    <source>
        <strain>cv. Columbia</strain>
    </source>
</reference>
<reference key="5">
    <citation type="journal article" date="2005" name="PLoS Comput. Biol.">
        <title>Inferring hypotheses on functional relationships of genes: Analysis of the Arabidopsis thaliana subtilase gene family.</title>
        <authorList>
            <person name="Rautengarten C."/>
            <person name="Steinhauser D."/>
            <person name="Bussis D."/>
            <person name="Stintzi A."/>
            <person name="Schaller A."/>
            <person name="Kopka J."/>
            <person name="Altmann T."/>
        </authorList>
    </citation>
    <scope>GENE FAMILY</scope>
    <scope>NOMENCLATURE</scope>
</reference>
<name>SBT3D_ARATH</name>